<gene>
    <name evidence="3" type="primary">AHI1-DT</name>
    <name type="synonym">C6orf217</name>
    <name type="synonym">LINC00271</name>
    <name type="synonym">NCRNA00271</name>
</gene>
<sequence length="271" mass="29146">MLNSPGTRRPVKEAQKYGEDSQKSHSPGTPGPRSSVTTLSASALSDSSSPDTPPRRGPGRPSTPARAPATSAPMMYSRRGVRRTARPAGADTRSSANQLPQPSGACANADSAPPADVSACLRRRSHGDRCVPRSRRRPRPRPRASTAFFQEEGPCGACPGALRPQAGASFRELRGLPPPRPREREQSPPLGAAPSSALSHQGWKNTRCATRGLVNTLVNTGHFLYLQPPAPLIMPYLDDAEVPGNRRSHPSLSFSWLSKALYHVTFLLRIL</sequence>
<organism>
    <name type="scientific">Homo sapiens</name>
    <name type="common">Human</name>
    <dbReference type="NCBI Taxonomy" id="9606"/>
    <lineage>
        <taxon>Eukaryota</taxon>
        <taxon>Metazoa</taxon>
        <taxon>Chordata</taxon>
        <taxon>Craniata</taxon>
        <taxon>Vertebrata</taxon>
        <taxon>Euteleostomi</taxon>
        <taxon>Mammalia</taxon>
        <taxon>Eutheria</taxon>
        <taxon>Euarchontoglires</taxon>
        <taxon>Primates</taxon>
        <taxon>Haplorrhini</taxon>
        <taxon>Catarrhini</taxon>
        <taxon>Hominidae</taxon>
        <taxon>Homo</taxon>
    </lineage>
</organism>
<name>CF217_HUMAN</name>
<keyword id="KW-1185">Reference proteome</keyword>
<proteinExistence type="uncertain"/>
<protein>
    <recommendedName>
        <fullName>Putative uncharacterized protein encoded by LINC00271</fullName>
    </recommendedName>
    <alternativeName>
        <fullName evidence="3">AHI1 divergent transcript</fullName>
    </alternativeName>
</protein>
<evidence type="ECO:0000256" key="1">
    <source>
        <dbReference type="SAM" id="MobiDB-lite"/>
    </source>
</evidence>
<evidence type="ECO:0000305" key="2"/>
<evidence type="ECO:0000312" key="3">
    <source>
        <dbReference type="HGNC" id="HGNC:32526"/>
    </source>
</evidence>
<comment type="caution">
    <text evidence="2">Product of a dubious CDS prediction.</text>
</comment>
<dbReference type="EMBL" id="AL133544">
    <property type="status" value="NOT_ANNOTATED_CDS"/>
    <property type="molecule type" value="Genomic_DNA"/>
</dbReference>
<dbReference type="EMBL" id="AL512426">
    <property type="status" value="NOT_ANNOTATED_CDS"/>
    <property type="molecule type" value="Genomic_DNA"/>
</dbReference>
<dbReference type="EMBL" id="AJ606326">
    <property type="status" value="NOT_ANNOTATED_CDS"/>
    <property type="molecule type" value="mRNA"/>
</dbReference>
<dbReference type="BioMuta" id="HGNC:32526"/>
<dbReference type="jPOST" id="P0C7V0"/>
<dbReference type="ProteomicsDB" id="52373"/>
<dbReference type="AGR" id="HGNC:32526"/>
<dbReference type="GeneCards" id="AHI1-DT"/>
<dbReference type="HGNC" id="HGNC:32526">
    <property type="gene designation" value="AHI1-DT"/>
</dbReference>
<dbReference type="neXtProt" id="NX_P0C7V0"/>
<dbReference type="InParanoid" id="P0C7V0"/>
<dbReference type="PAN-GO" id="P0C7V0">
    <property type="GO annotations" value="0 GO annotations based on evolutionary models"/>
</dbReference>
<dbReference type="Pharos" id="P0C7V0">
    <property type="development level" value="Tdark"/>
</dbReference>
<dbReference type="Proteomes" id="UP000005640">
    <property type="component" value="Unplaced"/>
</dbReference>
<dbReference type="RNAct" id="P0C7V0">
    <property type="molecule type" value="protein"/>
</dbReference>
<feature type="chain" id="PRO_0000343943" description="Putative uncharacterized protein encoded by LINC00271">
    <location>
        <begin position="1"/>
        <end position="271"/>
    </location>
</feature>
<feature type="region of interest" description="Disordered" evidence="1">
    <location>
        <begin position="1"/>
        <end position="202"/>
    </location>
</feature>
<feature type="compositionally biased region" description="Basic and acidic residues" evidence="1">
    <location>
        <begin position="10"/>
        <end position="23"/>
    </location>
</feature>
<feature type="compositionally biased region" description="Low complexity" evidence="1">
    <location>
        <begin position="33"/>
        <end position="50"/>
    </location>
</feature>
<feature type="compositionally biased region" description="Low complexity" evidence="1">
    <location>
        <begin position="59"/>
        <end position="73"/>
    </location>
</feature>
<feature type="compositionally biased region" description="Polar residues" evidence="1">
    <location>
        <begin position="92"/>
        <end position="101"/>
    </location>
</feature>
<feature type="compositionally biased region" description="Basic residues" evidence="1">
    <location>
        <begin position="121"/>
        <end position="142"/>
    </location>
</feature>
<feature type="sequence variant" id="VAR_056807" description="In dbSNP:rs13197384.">
    <original>A</original>
    <variation>E</variation>
    <location>
        <position position="112"/>
    </location>
</feature>
<accession>P0C7V0</accession>
<reference key="1">
    <citation type="journal article" date="2003" name="Nature">
        <title>The DNA sequence and analysis of human chromosome 6.</title>
        <authorList>
            <person name="Mungall A.J."/>
            <person name="Palmer S.A."/>
            <person name="Sims S.K."/>
            <person name="Edwards C.A."/>
            <person name="Ashurst J.L."/>
            <person name="Wilming L."/>
            <person name="Jones M.C."/>
            <person name="Horton R."/>
            <person name="Hunt S.E."/>
            <person name="Scott C.E."/>
            <person name="Gilbert J.G.R."/>
            <person name="Clamp M.E."/>
            <person name="Bethel G."/>
            <person name="Milne S."/>
            <person name="Ainscough R."/>
            <person name="Almeida J.P."/>
            <person name="Ambrose K.D."/>
            <person name="Andrews T.D."/>
            <person name="Ashwell R.I.S."/>
            <person name="Babbage A.K."/>
            <person name="Bagguley C.L."/>
            <person name="Bailey J."/>
            <person name="Banerjee R."/>
            <person name="Barker D.J."/>
            <person name="Barlow K.F."/>
            <person name="Bates K."/>
            <person name="Beare D.M."/>
            <person name="Beasley H."/>
            <person name="Beasley O."/>
            <person name="Bird C.P."/>
            <person name="Blakey S.E."/>
            <person name="Bray-Allen S."/>
            <person name="Brook J."/>
            <person name="Brown A.J."/>
            <person name="Brown J.Y."/>
            <person name="Burford D.C."/>
            <person name="Burrill W."/>
            <person name="Burton J."/>
            <person name="Carder C."/>
            <person name="Carter N.P."/>
            <person name="Chapman J.C."/>
            <person name="Clark S.Y."/>
            <person name="Clark G."/>
            <person name="Clee C.M."/>
            <person name="Clegg S."/>
            <person name="Cobley V."/>
            <person name="Collier R.E."/>
            <person name="Collins J.E."/>
            <person name="Colman L.K."/>
            <person name="Corby N.R."/>
            <person name="Coville G.J."/>
            <person name="Culley K.M."/>
            <person name="Dhami P."/>
            <person name="Davies J."/>
            <person name="Dunn M."/>
            <person name="Earthrowl M.E."/>
            <person name="Ellington A.E."/>
            <person name="Evans K.A."/>
            <person name="Faulkner L."/>
            <person name="Francis M.D."/>
            <person name="Frankish A."/>
            <person name="Frankland J."/>
            <person name="French L."/>
            <person name="Garner P."/>
            <person name="Garnett J."/>
            <person name="Ghori M.J."/>
            <person name="Gilby L.M."/>
            <person name="Gillson C.J."/>
            <person name="Glithero R.J."/>
            <person name="Grafham D.V."/>
            <person name="Grant M."/>
            <person name="Gribble S."/>
            <person name="Griffiths C."/>
            <person name="Griffiths M.N.D."/>
            <person name="Hall R."/>
            <person name="Halls K.S."/>
            <person name="Hammond S."/>
            <person name="Harley J.L."/>
            <person name="Hart E.A."/>
            <person name="Heath P.D."/>
            <person name="Heathcott R."/>
            <person name="Holmes S.J."/>
            <person name="Howden P.J."/>
            <person name="Howe K.L."/>
            <person name="Howell G.R."/>
            <person name="Huckle E."/>
            <person name="Humphray S.J."/>
            <person name="Humphries M.D."/>
            <person name="Hunt A.R."/>
            <person name="Johnson C.M."/>
            <person name="Joy A.A."/>
            <person name="Kay M."/>
            <person name="Keenan S.J."/>
            <person name="Kimberley A.M."/>
            <person name="King A."/>
            <person name="Laird G.K."/>
            <person name="Langford C."/>
            <person name="Lawlor S."/>
            <person name="Leongamornlert D.A."/>
            <person name="Leversha M."/>
            <person name="Lloyd C.R."/>
            <person name="Lloyd D.M."/>
            <person name="Loveland J.E."/>
            <person name="Lovell J."/>
            <person name="Martin S."/>
            <person name="Mashreghi-Mohammadi M."/>
            <person name="Maslen G.L."/>
            <person name="Matthews L."/>
            <person name="McCann O.T."/>
            <person name="McLaren S.J."/>
            <person name="McLay K."/>
            <person name="McMurray A."/>
            <person name="Moore M.J.F."/>
            <person name="Mullikin J.C."/>
            <person name="Niblett D."/>
            <person name="Nickerson T."/>
            <person name="Novik K.L."/>
            <person name="Oliver K."/>
            <person name="Overton-Larty E.K."/>
            <person name="Parker A."/>
            <person name="Patel R."/>
            <person name="Pearce A.V."/>
            <person name="Peck A.I."/>
            <person name="Phillimore B.J.C.T."/>
            <person name="Phillips S."/>
            <person name="Plumb R.W."/>
            <person name="Porter K.M."/>
            <person name="Ramsey Y."/>
            <person name="Ranby S.A."/>
            <person name="Rice C.M."/>
            <person name="Ross M.T."/>
            <person name="Searle S.M."/>
            <person name="Sehra H.K."/>
            <person name="Sheridan E."/>
            <person name="Skuce C.D."/>
            <person name="Smith S."/>
            <person name="Smith M."/>
            <person name="Spraggon L."/>
            <person name="Squares S.L."/>
            <person name="Steward C.A."/>
            <person name="Sycamore N."/>
            <person name="Tamlyn-Hall G."/>
            <person name="Tester J."/>
            <person name="Theaker A.J."/>
            <person name="Thomas D.W."/>
            <person name="Thorpe A."/>
            <person name="Tracey A."/>
            <person name="Tromans A."/>
            <person name="Tubby B."/>
            <person name="Wall M."/>
            <person name="Wallis J.M."/>
            <person name="West A.P."/>
            <person name="White S.S."/>
            <person name="Whitehead S.L."/>
            <person name="Whittaker H."/>
            <person name="Wild A."/>
            <person name="Willey D.J."/>
            <person name="Wilmer T.E."/>
            <person name="Wood J.M."/>
            <person name="Wray P.W."/>
            <person name="Wyatt J.C."/>
            <person name="Young L."/>
            <person name="Younger R.M."/>
            <person name="Bentley D.R."/>
            <person name="Coulson A."/>
            <person name="Durbin R.M."/>
            <person name="Hubbard T."/>
            <person name="Sulston J.E."/>
            <person name="Dunham I."/>
            <person name="Rogers J."/>
            <person name="Beck S."/>
        </authorList>
    </citation>
    <scope>NUCLEOTIDE SEQUENCE [LARGE SCALE GENOMIC DNA]</scope>
</reference>
<reference key="2">
    <citation type="journal article" date="2004" name="BMC Genomics">
        <title>Genome annotation of a 1.5 Mb region of human chromosome 6q23 encompassing a quantitative trait locus for fetal hemoglobin expression in adults.</title>
        <authorList>
            <person name="Close J.P."/>
            <person name="Game L."/>
            <person name="Clark B."/>
            <person name="Bergounioux J."/>
            <person name="Gerovassili A."/>
            <person name="Thein S.L."/>
        </authorList>
    </citation>
    <scope>NUCLEOTIDE SEQUENCE [MRNA] OF 156-271</scope>
</reference>